<dbReference type="EMBL" id="AE014291">
    <property type="protein sequence ID" value="AAN29423.1"/>
    <property type="molecule type" value="Genomic_DNA"/>
</dbReference>
<dbReference type="EMBL" id="CP002997">
    <property type="protein sequence ID" value="AEM17836.1"/>
    <property type="molecule type" value="Genomic_DNA"/>
</dbReference>
<dbReference type="RefSeq" id="WP_004683145.1">
    <property type="nucleotide sequence ID" value="NZ_KN046804.1"/>
</dbReference>
<dbReference type="SMR" id="Q8G253"/>
<dbReference type="KEGG" id="bms:BR0480"/>
<dbReference type="KEGG" id="bsi:BS1330_I0481"/>
<dbReference type="PATRIC" id="fig|204722.21.peg.1440"/>
<dbReference type="HOGENOM" id="CLU_057596_1_0_5"/>
<dbReference type="PhylomeDB" id="Q8G253"/>
<dbReference type="Proteomes" id="UP000007104">
    <property type="component" value="Chromosome I"/>
</dbReference>
<dbReference type="GO" id="GO:0005829">
    <property type="term" value="C:cytosol"/>
    <property type="evidence" value="ECO:0007669"/>
    <property type="project" value="TreeGrafter"/>
</dbReference>
<dbReference type="Gene3D" id="3.40.1740.10">
    <property type="entry name" value="VC0467-like"/>
    <property type="match status" value="1"/>
</dbReference>
<dbReference type="HAMAP" id="MF_00758">
    <property type="entry name" value="UPF0301"/>
    <property type="match status" value="1"/>
</dbReference>
<dbReference type="InterPro" id="IPR003774">
    <property type="entry name" value="AlgH-like"/>
</dbReference>
<dbReference type="NCBIfam" id="NF001268">
    <property type="entry name" value="PRK00228.1-4"/>
    <property type="match status" value="1"/>
</dbReference>
<dbReference type="PANTHER" id="PTHR30327">
    <property type="entry name" value="UNCHARACTERIZED PROTEIN YQGE"/>
    <property type="match status" value="1"/>
</dbReference>
<dbReference type="PANTHER" id="PTHR30327:SF1">
    <property type="entry name" value="UPF0301 PROTEIN YQGE"/>
    <property type="match status" value="1"/>
</dbReference>
<dbReference type="Pfam" id="PF02622">
    <property type="entry name" value="DUF179"/>
    <property type="match status" value="1"/>
</dbReference>
<dbReference type="SUPFAM" id="SSF143456">
    <property type="entry name" value="VC0467-like"/>
    <property type="match status" value="1"/>
</dbReference>
<sequence>MTTHRKPSQEQGFLNGQFLLAMPGMSDERFARSVVYICAHSDEGAMGFIINQLQPVQFPDLLRQIGVIGEEDLIILPDRAQHMVVRNGGPVDRTRGFVLHSDDYMVDSTMPVSDDVCLTATVDILRAIYGGGGPERALMALGYSGWAPGQLEMEVAENGWLTCDAPLDMLFDSDIEGKYSRLMLHMGIDMSRLVSDAGHA</sequence>
<gene>
    <name type="ordered locus">BR0480</name>
    <name type="ordered locus">BS1330_I0481</name>
</gene>
<proteinExistence type="inferred from homology"/>
<reference key="1">
    <citation type="journal article" date="2002" name="Proc. Natl. Acad. Sci. U.S.A.">
        <title>The Brucella suis genome reveals fundamental similarities between animal and plant pathogens and symbionts.</title>
        <authorList>
            <person name="Paulsen I.T."/>
            <person name="Seshadri R."/>
            <person name="Nelson K.E."/>
            <person name="Eisen J.A."/>
            <person name="Heidelberg J.F."/>
            <person name="Read T.D."/>
            <person name="Dodson R.J."/>
            <person name="Umayam L.A."/>
            <person name="Brinkac L.M."/>
            <person name="Beanan M.J."/>
            <person name="Daugherty S.C."/>
            <person name="DeBoy R.T."/>
            <person name="Durkin A.S."/>
            <person name="Kolonay J.F."/>
            <person name="Madupu R."/>
            <person name="Nelson W.C."/>
            <person name="Ayodeji B."/>
            <person name="Kraul M."/>
            <person name="Shetty J."/>
            <person name="Malek J.A."/>
            <person name="Van Aken S.E."/>
            <person name="Riedmuller S."/>
            <person name="Tettelin H."/>
            <person name="Gill S.R."/>
            <person name="White O."/>
            <person name="Salzberg S.L."/>
            <person name="Hoover D.L."/>
            <person name="Lindler L.E."/>
            <person name="Halling S.M."/>
            <person name="Boyle S.M."/>
            <person name="Fraser C.M."/>
        </authorList>
    </citation>
    <scope>NUCLEOTIDE SEQUENCE [LARGE SCALE GENOMIC DNA]</scope>
    <source>
        <strain>1330</strain>
    </source>
</reference>
<reference key="2">
    <citation type="journal article" date="2011" name="J. Bacteriol.">
        <title>Revised genome sequence of Brucella suis 1330.</title>
        <authorList>
            <person name="Tae H."/>
            <person name="Shallom S."/>
            <person name="Settlage R."/>
            <person name="Preston D."/>
            <person name="Adams L.G."/>
            <person name="Garner H.R."/>
        </authorList>
    </citation>
    <scope>NUCLEOTIDE SEQUENCE [LARGE SCALE GENOMIC DNA]</scope>
    <source>
        <strain>1330</strain>
    </source>
</reference>
<accession>Q8G253</accession>
<accession>G0K729</accession>
<feature type="chain" id="PRO_0000214311" description="UPF0301 protein BR0480/BS1330_I0481">
    <location>
        <begin position="1"/>
        <end position="200"/>
    </location>
</feature>
<evidence type="ECO:0000255" key="1">
    <source>
        <dbReference type="HAMAP-Rule" id="MF_00758"/>
    </source>
</evidence>
<name>Y480_BRUSU</name>
<organism>
    <name type="scientific">Brucella suis biovar 1 (strain 1330)</name>
    <dbReference type="NCBI Taxonomy" id="204722"/>
    <lineage>
        <taxon>Bacteria</taxon>
        <taxon>Pseudomonadati</taxon>
        <taxon>Pseudomonadota</taxon>
        <taxon>Alphaproteobacteria</taxon>
        <taxon>Hyphomicrobiales</taxon>
        <taxon>Brucellaceae</taxon>
        <taxon>Brucella/Ochrobactrum group</taxon>
        <taxon>Brucella</taxon>
    </lineage>
</organism>
<protein>
    <recommendedName>
        <fullName evidence="1">UPF0301 protein BR0480/BS1330_I0481</fullName>
    </recommendedName>
</protein>
<comment type="similarity">
    <text evidence="1">Belongs to the UPF0301 (AlgH) family.</text>
</comment>